<reference key="1">
    <citation type="journal article" date="2002" name="DNA Res.">
        <title>Complete genome structure of the thermophilic cyanobacterium Thermosynechococcus elongatus BP-1.</title>
        <authorList>
            <person name="Nakamura Y."/>
            <person name="Kaneko T."/>
            <person name="Sato S."/>
            <person name="Ikeuchi M."/>
            <person name="Katoh H."/>
            <person name="Sasamoto S."/>
            <person name="Watanabe A."/>
            <person name="Iriguchi M."/>
            <person name="Kawashima K."/>
            <person name="Kimura T."/>
            <person name="Kishida Y."/>
            <person name="Kiyokawa C."/>
            <person name="Kohara M."/>
            <person name="Matsumoto M."/>
            <person name="Matsuno A."/>
            <person name="Nakazaki N."/>
            <person name="Shimpo S."/>
            <person name="Sugimoto M."/>
            <person name="Takeuchi C."/>
            <person name="Yamada M."/>
            <person name="Tabata S."/>
        </authorList>
    </citation>
    <scope>NUCLEOTIDE SEQUENCE [LARGE SCALE GENOMIC DNA]</scope>
    <source>
        <strain>NIES-2133 / IAM M-273 / BP-1</strain>
    </source>
</reference>
<comment type="function">
    <text evidence="1">Catalyzes the N-acylation of UDP-3-O-acylglucosamine using 3-hydroxyacyl-ACP as the acyl donor. Is involved in the biosynthesis of lipid A, a phosphorylated glycolipid that anchors the lipopolysaccharide to the outer membrane of the cell.</text>
</comment>
<comment type="catalytic activity">
    <reaction evidence="1">
        <text>a UDP-3-O-[(3R)-3-hydroxyacyl]-alpha-D-glucosamine + a (3R)-hydroxyacyl-[ACP] = a UDP-2-N,3-O-bis[(3R)-3-hydroxyacyl]-alpha-D-glucosamine + holo-[ACP] + H(+)</text>
        <dbReference type="Rhea" id="RHEA:53836"/>
        <dbReference type="Rhea" id="RHEA-COMP:9685"/>
        <dbReference type="Rhea" id="RHEA-COMP:9945"/>
        <dbReference type="ChEBI" id="CHEBI:15378"/>
        <dbReference type="ChEBI" id="CHEBI:64479"/>
        <dbReference type="ChEBI" id="CHEBI:78827"/>
        <dbReference type="ChEBI" id="CHEBI:137740"/>
        <dbReference type="ChEBI" id="CHEBI:137748"/>
        <dbReference type="EC" id="2.3.1.191"/>
    </reaction>
</comment>
<comment type="pathway">
    <text evidence="1">Bacterial outer membrane biogenesis; LPS lipid A biosynthesis.</text>
</comment>
<comment type="subunit">
    <text evidence="1">Homotrimer.</text>
</comment>
<comment type="similarity">
    <text evidence="1">Belongs to the transferase hexapeptide repeat family. LpxD subfamily.</text>
</comment>
<organism>
    <name type="scientific">Thermosynechococcus vestitus (strain NIES-2133 / IAM M-273 / BP-1)</name>
    <dbReference type="NCBI Taxonomy" id="197221"/>
    <lineage>
        <taxon>Bacteria</taxon>
        <taxon>Bacillati</taxon>
        <taxon>Cyanobacteriota</taxon>
        <taxon>Cyanophyceae</taxon>
        <taxon>Acaryochloridales</taxon>
        <taxon>Thermosynechococcaceae</taxon>
        <taxon>Thermosynechococcus</taxon>
    </lineage>
</organism>
<evidence type="ECO:0000255" key="1">
    <source>
        <dbReference type="HAMAP-Rule" id="MF_00523"/>
    </source>
</evidence>
<name>LPXD_THEVB</name>
<keyword id="KW-0012">Acyltransferase</keyword>
<keyword id="KW-0441">Lipid A biosynthesis</keyword>
<keyword id="KW-0444">Lipid biosynthesis</keyword>
<keyword id="KW-0443">Lipid metabolism</keyword>
<keyword id="KW-1185">Reference proteome</keyword>
<keyword id="KW-0677">Repeat</keyword>
<keyword id="KW-0808">Transferase</keyword>
<dbReference type="EC" id="2.3.1.191" evidence="1"/>
<dbReference type="EMBL" id="BA000039">
    <property type="protein sequence ID" value="BAC07585.1"/>
    <property type="molecule type" value="Genomic_DNA"/>
</dbReference>
<dbReference type="RefSeq" id="NP_680823.1">
    <property type="nucleotide sequence ID" value="NC_004113.1"/>
</dbReference>
<dbReference type="RefSeq" id="WP_011055887.1">
    <property type="nucleotide sequence ID" value="NC_004113.1"/>
</dbReference>
<dbReference type="SMR" id="Q8DMS9"/>
<dbReference type="STRING" id="197221.gene:10746610"/>
<dbReference type="EnsemblBacteria" id="BAC07585">
    <property type="protein sequence ID" value="BAC07585"/>
    <property type="gene ID" value="BAC07585"/>
</dbReference>
<dbReference type="KEGG" id="tel:tll0032"/>
<dbReference type="PATRIC" id="fig|197221.4.peg.31"/>
<dbReference type="eggNOG" id="COG1044">
    <property type="taxonomic scope" value="Bacteria"/>
</dbReference>
<dbReference type="UniPathway" id="UPA00973"/>
<dbReference type="Proteomes" id="UP000000440">
    <property type="component" value="Chromosome"/>
</dbReference>
<dbReference type="GO" id="GO:0031470">
    <property type="term" value="C:carboxysome"/>
    <property type="evidence" value="ECO:0007669"/>
    <property type="project" value="UniProtKB-ARBA"/>
</dbReference>
<dbReference type="GO" id="GO:0016020">
    <property type="term" value="C:membrane"/>
    <property type="evidence" value="ECO:0007669"/>
    <property type="project" value="GOC"/>
</dbReference>
<dbReference type="GO" id="GO:0016410">
    <property type="term" value="F:N-acyltransferase activity"/>
    <property type="evidence" value="ECO:0007669"/>
    <property type="project" value="InterPro"/>
</dbReference>
<dbReference type="GO" id="GO:0043886">
    <property type="term" value="F:structural constituent of carboxysome shell"/>
    <property type="evidence" value="ECO:0007669"/>
    <property type="project" value="UniProtKB-ARBA"/>
</dbReference>
<dbReference type="GO" id="GO:0009245">
    <property type="term" value="P:lipid A biosynthetic process"/>
    <property type="evidence" value="ECO:0007669"/>
    <property type="project" value="UniProtKB-UniRule"/>
</dbReference>
<dbReference type="CDD" id="cd03352">
    <property type="entry name" value="LbH_LpxD"/>
    <property type="match status" value="1"/>
</dbReference>
<dbReference type="Gene3D" id="2.160.10.10">
    <property type="entry name" value="Hexapeptide repeat proteins"/>
    <property type="match status" value="1"/>
</dbReference>
<dbReference type="Gene3D" id="3.40.1390.10">
    <property type="entry name" value="MurE/MurF, N-terminal domain"/>
    <property type="match status" value="1"/>
</dbReference>
<dbReference type="HAMAP" id="MF_00523">
    <property type="entry name" value="LpxD"/>
    <property type="match status" value="1"/>
</dbReference>
<dbReference type="InterPro" id="IPR001451">
    <property type="entry name" value="Hexapep"/>
</dbReference>
<dbReference type="InterPro" id="IPR007691">
    <property type="entry name" value="LpxD"/>
</dbReference>
<dbReference type="InterPro" id="IPR011004">
    <property type="entry name" value="Trimer_LpxA-like_sf"/>
</dbReference>
<dbReference type="InterPro" id="IPR020573">
    <property type="entry name" value="UDP_GlcNAc_AcTrfase_non-rep"/>
</dbReference>
<dbReference type="NCBIfam" id="TIGR01853">
    <property type="entry name" value="lipid_A_lpxD"/>
    <property type="match status" value="1"/>
</dbReference>
<dbReference type="NCBIfam" id="NF002060">
    <property type="entry name" value="PRK00892.1"/>
    <property type="match status" value="1"/>
</dbReference>
<dbReference type="PANTHER" id="PTHR43378">
    <property type="entry name" value="UDP-3-O-ACYLGLUCOSAMINE N-ACYLTRANSFERASE"/>
    <property type="match status" value="1"/>
</dbReference>
<dbReference type="PANTHER" id="PTHR43378:SF2">
    <property type="entry name" value="UDP-3-O-ACYLGLUCOSAMINE N-ACYLTRANSFERASE 1, MITOCHONDRIAL-RELATED"/>
    <property type="match status" value="1"/>
</dbReference>
<dbReference type="Pfam" id="PF00132">
    <property type="entry name" value="Hexapep"/>
    <property type="match status" value="2"/>
</dbReference>
<dbReference type="Pfam" id="PF04613">
    <property type="entry name" value="LpxD"/>
    <property type="match status" value="1"/>
</dbReference>
<dbReference type="SUPFAM" id="SSF51161">
    <property type="entry name" value="Trimeric LpxA-like enzymes"/>
    <property type="match status" value="1"/>
</dbReference>
<dbReference type="PROSITE" id="PS00101">
    <property type="entry name" value="HEXAPEP_TRANSFERASES"/>
    <property type="match status" value="1"/>
</dbReference>
<sequence>MRLADVAERFGATLDCPEHGDRPVLGVAPLETATATDISFLANPKYTALLQTTQAAAVFVRPDFQGEAACPLLRVPHPYLAFAKCIEWFYPQPKPVAKIHPTAILGADVVLGAEVTIGAYTVIGDRVRIGDRTVIDSHCTLYDDVVIGSDCRIYSHCALRERVQLGDRVILQNSVVLGSDGFGYVPLPDGRHYKIPQVGTVVIGNDVEIGAGTTIDRATLGETTVANGTKIDNLTMVAHNCTIGENAILCAQVGLAGSTHIGNHVVLAGQVGAAGHLTIGDRTVVSAKSGISSSVPPDSRMGGIPAMDQTLYLKVSAAVKQLPDLLKRVRKLEAKVGE</sequence>
<gene>
    <name evidence="1" type="primary">lpxD</name>
    <name type="ordered locus">tll0032</name>
</gene>
<proteinExistence type="inferred from homology"/>
<accession>Q8DMS9</accession>
<protein>
    <recommendedName>
        <fullName evidence="1">UDP-3-O-acylglucosamine N-acyltransferase</fullName>
        <ecNumber evidence="1">2.3.1.191</ecNumber>
    </recommendedName>
</protein>
<feature type="chain" id="PRO_0000059705" description="UDP-3-O-acylglucosamine N-acyltransferase">
    <location>
        <begin position="1"/>
        <end position="338"/>
    </location>
</feature>
<feature type="active site" description="Proton acceptor" evidence="1">
    <location>
        <position position="239"/>
    </location>
</feature>